<protein>
    <recommendedName>
        <fullName evidence="1">Ribonuclease T</fullName>
        <ecNumber evidence="1">3.1.13.-</ecNumber>
    </recommendedName>
    <alternativeName>
        <fullName evidence="1">Exoribonuclease T</fullName>
        <shortName evidence="1">RNase T</shortName>
    </alternativeName>
</protein>
<comment type="function">
    <text evidence="1">Trims short 3' overhangs of a variety of RNA species, leaving a one or two nucleotide 3' overhang. Responsible for the end-turnover of tRNA: specifically removes the terminal AMP residue from uncharged tRNA (tRNA-C-C-A). Also appears to be involved in tRNA biosynthesis.</text>
</comment>
<comment type="cofactor">
    <cofactor evidence="1">
        <name>Mg(2+)</name>
        <dbReference type="ChEBI" id="CHEBI:18420"/>
    </cofactor>
    <text evidence="1">Binds two Mg(2+) per subunit. The active form of the enzyme binds two Mg(2+) ions in its active site. The first Mg(2+) forms only one salt bridge with the protein.</text>
</comment>
<comment type="subunit">
    <text evidence="1">Homodimer.</text>
</comment>
<comment type="similarity">
    <text evidence="1">Belongs to the RNase T family.</text>
</comment>
<sequence>MEQTTEQIDYKLLKHRFRGYLPVVIDVETAGLNAQTDALLELAAITLKMDEQGYLVPDQQCHFHIAPFEGANINPESLKFNGIDIDNPLRGAVAENIAIPGMFIMVRKAMKEQGCQRGVIVAHNAASDPGFFYRAAIKRINAKRDPFHPFAMFDTATLAGFMYGQTVLVKACQVAKIPFDGKQAHSALYDTERTAELFCAMVNRLKDLGGFPPLSD</sequence>
<proteinExistence type="inferred from homology"/>
<dbReference type="EC" id="3.1.13.-" evidence="1"/>
<dbReference type="EMBL" id="U73302">
    <property type="protein sequence ID" value="AAB93471.1"/>
    <property type="molecule type" value="Genomic_DNA"/>
</dbReference>
<dbReference type="SMR" id="O54364"/>
<dbReference type="STRING" id="75985.WC39_03600"/>
<dbReference type="GO" id="GO:0005829">
    <property type="term" value="C:cytosol"/>
    <property type="evidence" value="ECO:0007669"/>
    <property type="project" value="TreeGrafter"/>
</dbReference>
<dbReference type="GO" id="GO:0008408">
    <property type="term" value="F:3'-5' exonuclease activity"/>
    <property type="evidence" value="ECO:0007669"/>
    <property type="project" value="TreeGrafter"/>
</dbReference>
<dbReference type="GO" id="GO:0000287">
    <property type="term" value="F:magnesium ion binding"/>
    <property type="evidence" value="ECO:0007669"/>
    <property type="project" value="UniProtKB-UniRule"/>
</dbReference>
<dbReference type="GO" id="GO:0003676">
    <property type="term" value="F:nucleic acid binding"/>
    <property type="evidence" value="ECO:0007669"/>
    <property type="project" value="InterPro"/>
</dbReference>
<dbReference type="GO" id="GO:0016896">
    <property type="term" value="F:RNA exonuclease activity, producing 5'-phosphomonoesters"/>
    <property type="evidence" value="ECO:0007669"/>
    <property type="project" value="UniProtKB-UniRule"/>
</dbReference>
<dbReference type="GO" id="GO:0045004">
    <property type="term" value="P:DNA replication proofreading"/>
    <property type="evidence" value="ECO:0007669"/>
    <property type="project" value="TreeGrafter"/>
</dbReference>
<dbReference type="GO" id="GO:0008033">
    <property type="term" value="P:tRNA processing"/>
    <property type="evidence" value="ECO:0007669"/>
    <property type="project" value="UniProtKB-KW"/>
</dbReference>
<dbReference type="FunFam" id="3.30.420.10:FF:000009">
    <property type="entry name" value="Ribonuclease T"/>
    <property type="match status" value="1"/>
</dbReference>
<dbReference type="Gene3D" id="3.30.420.10">
    <property type="entry name" value="Ribonuclease H-like superfamily/Ribonuclease H"/>
    <property type="match status" value="1"/>
</dbReference>
<dbReference type="HAMAP" id="MF_00157">
    <property type="entry name" value="RNase_T"/>
    <property type="match status" value="1"/>
</dbReference>
<dbReference type="InterPro" id="IPR013520">
    <property type="entry name" value="Exonuclease_RNaseT/DNA_pol3"/>
</dbReference>
<dbReference type="InterPro" id="IPR005987">
    <property type="entry name" value="RNase_T"/>
</dbReference>
<dbReference type="InterPro" id="IPR012337">
    <property type="entry name" value="RNaseH-like_sf"/>
</dbReference>
<dbReference type="InterPro" id="IPR036397">
    <property type="entry name" value="RNaseH_sf"/>
</dbReference>
<dbReference type="NCBIfam" id="TIGR01298">
    <property type="entry name" value="RNaseT"/>
    <property type="match status" value="1"/>
</dbReference>
<dbReference type="PANTHER" id="PTHR30231">
    <property type="entry name" value="DNA POLYMERASE III SUBUNIT EPSILON"/>
    <property type="match status" value="1"/>
</dbReference>
<dbReference type="PANTHER" id="PTHR30231:SF2">
    <property type="entry name" value="RIBONUCLEASE T"/>
    <property type="match status" value="1"/>
</dbReference>
<dbReference type="Pfam" id="PF00929">
    <property type="entry name" value="RNase_T"/>
    <property type="match status" value="1"/>
</dbReference>
<dbReference type="SMART" id="SM00479">
    <property type="entry name" value="EXOIII"/>
    <property type="match status" value="1"/>
</dbReference>
<dbReference type="SUPFAM" id="SSF53098">
    <property type="entry name" value="Ribonuclease H-like"/>
    <property type="match status" value="1"/>
</dbReference>
<organism>
    <name type="scientific">Mannheimia haemolytica</name>
    <name type="common">Pasteurella haemolytica</name>
    <dbReference type="NCBI Taxonomy" id="75985"/>
    <lineage>
        <taxon>Bacteria</taxon>
        <taxon>Pseudomonadati</taxon>
        <taxon>Pseudomonadota</taxon>
        <taxon>Gammaproteobacteria</taxon>
        <taxon>Pasteurellales</taxon>
        <taxon>Pasteurellaceae</taxon>
        <taxon>Mannheimia</taxon>
    </lineage>
</organism>
<keyword id="KW-0269">Exonuclease</keyword>
<keyword id="KW-0378">Hydrolase</keyword>
<keyword id="KW-0460">Magnesium</keyword>
<keyword id="KW-0479">Metal-binding</keyword>
<keyword id="KW-0540">Nuclease</keyword>
<keyword id="KW-0819">tRNA processing</keyword>
<name>RNT_MANHA</name>
<accession>O54364</accession>
<evidence type="ECO:0000255" key="1">
    <source>
        <dbReference type="HAMAP-Rule" id="MF_00157"/>
    </source>
</evidence>
<feature type="chain" id="PRO_0000208965" description="Ribonuclease T">
    <location>
        <begin position="1"/>
        <end position="216"/>
    </location>
</feature>
<feature type="domain" description="Exonuclease" evidence="1">
    <location>
        <begin position="23"/>
        <end position="198"/>
    </location>
</feature>
<feature type="active site" description="Proton donor/acceptor" evidence="1">
    <location>
        <position position="185"/>
    </location>
</feature>
<feature type="binding site" evidence="1">
    <location>
        <position position="26"/>
    </location>
    <ligand>
        <name>Mg(2+)</name>
        <dbReference type="ChEBI" id="CHEBI:18420"/>
        <label>1</label>
        <note>catalytic</note>
    </ligand>
</feature>
<feature type="binding site" evidence="1">
    <location>
        <position position="26"/>
    </location>
    <ligand>
        <name>Mg(2+)</name>
        <dbReference type="ChEBI" id="CHEBI:18420"/>
        <label>2</label>
        <note>catalytic</note>
    </ligand>
</feature>
<feature type="binding site" evidence="1">
    <location>
        <position position="28"/>
    </location>
    <ligand>
        <name>Mg(2+)</name>
        <dbReference type="ChEBI" id="CHEBI:18420"/>
        <label>2</label>
        <note>catalytic</note>
    </ligand>
</feature>
<feature type="binding site" evidence="1">
    <location>
        <position position="185"/>
    </location>
    <ligand>
        <name>Mg(2+)</name>
        <dbReference type="ChEBI" id="CHEBI:18420"/>
        <label>2</label>
        <note>catalytic</note>
    </ligand>
</feature>
<feature type="binding site" evidence="1">
    <location>
        <position position="190"/>
    </location>
    <ligand>
        <name>Mg(2+)</name>
        <dbReference type="ChEBI" id="CHEBI:18420"/>
        <label>2</label>
        <note>catalytic</note>
    </ligand>
</feature>
<feature type="site" description="Important for substrate binding and specificity" evidence="1">
    <location>
        <position position="80"/>
    </location>
</feature>
<feature type="site" description="Important for substrate binding and specificity" evidence="1">
    <location>
        <position position="150"/>
    </location>
</feature>
<reference key="1">
    <citation type="submission" date="1996-10" db="EMBL/GenBank/DDBJ databases">
        <title>Characterization of the Pasteurella haemolytica transferrin receptor protein genes and the recombinant receptor proteins.</title>
        <authorList>
            <person name="Schryvers A.B."/>
            <person name="Ogunnariwo J.A."/>
            <person name="Gonzalez G.C."/>
            <person name="Woo T.K.W."/>
            <person name="Lo R.Y.C."/>
        </authorList>
    </citation>
    <scope>NUCLEOTIDE SEQUENCE [GENOMIC DNA]</scope>
    <source>
        <strain>h196</strain>
    </source>
</reference>
<gene>
    <name evidence="1" type="primary">rnt</name>
</gene>